<protein>
    <recommendedName>
        <fullName evidence="3 4">Apyrase</fullName>
        <ecNumber evidence="1 2">3.6.1.5</ecNumber>
    </recommendedName>
</protein>
<organism>
    <name type="scientific">Cimex lectularius</name>
    <name type="common">Bed bug</name>
    <name type="synonym">Acanthia lectularia</name>
    <dbReference type="NCBI Taxonomy" id="79782"/>
    <lineage>
        <taxon>Eukaryota</taxon>
        <taxon>Metazoa</taxon>
        <taxon>Ecdysozoa</taxon>
        <taxon>Arthropoda</taxon>
        <taxon>Hexapoda</taxon>
        <taxon>Insecta</taxon>
        <taxon>Pterygota</taxon>
        <taxon>Neoptera</taxon>
        <taxon>Paraneoptera</taxon>
        <taxon>Hemiptera</taxon>
        <taxon>Heteroptera</taxon>
        <taxon>Panheteroptera</taxon>
        <taxon>Cimicomorpha</taxon>
        <taxon>Cimicidae</taxon>
        <taxon>Cimex</taxon>
    </lineage>
</organism>
<evidence type="ECO:0000269" key="1">
    <source>
    </source>
</evidence>
<evidence type="ECO:0000269" key="2">
    <source ref="2"/>
</evidence>
<evidence type="ECO:0000303" key="3">
    <source>
    </source>
</evidence>
<evidence type="ECO:0000303" key="4">
    <source ref="2"/>
</evidence>
<evidence type="ECO:0000305" key="5"/>
<evidence type="ECO:0000312" key="6">
    <source>
        <dbReference type="EMBL" id="AAD09177.1"/>
    </source>
</evidence>
<dbReference type="EC" id="3.6.1.5" evidence="1 2"/>
<dbReference type="EMBL" id="AF085499">
    <property type="protein sequence ID" value="AAD09177.1"/>
    <property type="molecule type" value="mRNA"/>
</dbReference>
<dbReference type="RefSeq" id="NP_001303629.1">
    <property type="nucleotide sequence ID" value="NM_001316700.1"/>
</dbReference>
<dbReference type="SMR" id="O96559"/>
<dbReference type="FunCoup" id="O96559">
    <property type="interactions" value="579"/>
</dbReference>
<dbReference type="GeneID" id="106669828"/>
<dbReference type="KEGG" id="clec:106669828"/>
<dbReference type="CTD" id="106669828"/>
<dbReference type="VEuPathDB" id="VectorBase:LOC106669828"/>
<dbReference type="InParanoid" id="O96559"/>
<dbReference type="OrthoDB" id="25028at2759"/>
<dbReference type="Proteomes" id="UP000494040">
    <property type="component" value="Unplaced"/>
</dbReference>
<dbReference type="GO" id="GO:0005615">
    <property type="term" value="C:extracellular space"/>
    <property type="evidence" value="ECO:0000303"/>
    <property type="project" value="UniProtKB"/>
</dbReference>
<dbReference type="GO" id="GO:0004050">
    <property type="term" value="F:apyrase activity"/>
    <property type="evidence" value="ECO:0007669"/>
    <property type="project" value="UniProtKB-EC"/>
</dbReference>
<dbReference type="GO" id="GO:0005524">
    <property type="term" value="F:ATP binding"/>
    <property type="evidence" value="ECO:0007669"/>
    <property type="project" value="UniProtKB-KW"/>
</dbReference>
<dbReference type="GO" id="GO:0005509">
    <property type="term" value="F:calcium ion binding"/>
    <property type="evidence" value="ECO:0007669"/>
    <property type="project" value="InterPro"/>
</dbReference>
<dbReference type="GO" id="GO:0030899">
    <property type="term" value="F:calcium-dependent ATPase activity"/>
    <property type="evidence" value="ECO:0000314"/>
    <property type="project" value="UniProtKB"/>
</dbReference>
<dbReference type="GO" id="GO:0004382">
    <property type="term" value="F:GDP phosphatase activity"/>
    <property type="evidence" value="ECO:0007669"/>
    <property type="project" value="TreeGrafter"/>
</dbReference>
<dbReference type="GO" id="GO:0017110">
    <property type="term" value="F:nucleoside diphosphate phosphatase activity"/>
    <property type="evidence" value="ECO:0000314"/>
    <property type="project" value="UniProtKB"/>
</dbReference>
<dbReference type="GO" id="GO:0090729">
    <property type="term" value="F:toxin activity"/>
    <property type="evidence" value="ECO:0007669"/>
    <property type="project" value="UniProtKB-KW"/>
</dbReference>
<dbReference type="GO" id="GO:0045134">
    <property type="term" value="F:UDP phosphatase activity"/>
    <property type="evidence" value="ECO:0007669"/>
    <property type="project" value="TreeGrafter"/>
</dbReference>
<dbReference type="GO" id="GO:0030195">
    <property type="term" value="P:negative regulation of blood coagulation"/>
    <property type="evidence" value="ECO:0000303"/>
    <property type="project" value="UniProtKB"/>
</dbReference>
<dbReference type="GO" id="GO:0030166">
    <property type="term" value="P:proteoglycan biosynthetic process"/>
    <property type="evidence" value="ECO:0007669"/>
    <property type="project" value="TreeGrafter"/>
</dbReference>
<dbReference type="FunFam" id="2.120.10.100:FF:000001">
    <property type="entry name" value="Soluble calcium-activated nucleotidase 1"/>
    <property type="match status" value="1"/>
</dbReference>
<dbReference type="Gene3D" id="2.120.10.100">
    <property type="entry name" value="Apyrase"/>
    <property type="match status" value="1"/>
</dbReference>
<dbReference type="InterPro" id="IPR009283">
    <property type="entry name" value="Apyrase"/>
</dbReference>
<dbReference type="InterPro" id="IPR036258">
    <property type="entry name" value="Apyrase_sf"/>
</dbReference>
<dbReference type="PANTHER" id="PTHR13023">
    <property type="entry name" value="APYRASE"/>
    <property type="match status" value="1"/>
</dbReference>
<dbReference type="PANTHER" id="PTHR13023:SF3">
    <property type="entry name" value="SOLUBLE CALCIUM-ACTIVATED NUCLEOTIDASE 1"/>
    <property type="match status" value="1"/>
</dbReference>
<dbReference type="Pfam" id="PF06079">
    <property type="entry name" value="Apyrase"/>
    <property type="match status" value="1"/>
</dbReference>
<dbReference type="SUPFAM" id="SSF101887">
    <property type="entry name" value="Apyrase"/>
    <property type="match status" value="1"/>
</dbReference>
<comment type="function">
    <text evidence="1 2">Facilitates hematophagy by inhibiting ADP-dependent platelet aggregation in the host (PubMed:9804829, Ref.2). Cleaves adenosine triphosphate (ATP) and adenosine diphosphate (ADP) to adenosine monophosphate (AMP) and inorganic phosphate in calcium-dependent manner (PubMed:9804829, Ref.2).</text>
</comment>
<comment type="catalytic activity">
    <reaction evidence="1 2">
        <text>a ribonucleoside 5'-triphosphate + 2 H2O = a ribonucleoside 5'-phosphate + 2 phosphate + 2 H(+)</text>
        <dbReference type="Rhea" id="RHEA:36795"/>
        <dbReference type="ChEBI" id="CHEBI:15377"/>
        <dbReference type="ChEBI" id="CHEBI:15378"/>
        <dbReference type="ChEBI" id="CHEBI:43474"/>
        <dbReference type="ChEBI" id="CHEBI:58043"/>
        <dbReference type="ChEBI" id="CHEBI:61557"/>
        <dbReference type="EC" id="3.6.1.5"/>
    </reaction>
    <physiologicalReaction direction="left-to-right" evidence="5">
        <dbReference type="Rhea" id="RHEA:36796"/>
    </physiologicalReaction>
</comment>
<comment type="cofactor">
    <cofactor evidence="1 2">
        <name>Ca(2+)</name>
        <dbReference type="ChEBI" id="CHEBI:29108"/>
    </cofactor>
</comment>
<comment type="biophysicochemical properties">
    <phDependence>
        <text evidence="2">Optimum pH is 8.5.</text>
    </phDependence>
</comment>
<comment type="subcellular location">
    <subcellularLocation>
        <location evidence="5">Secreted</location>
    </subcellularLocation>
</comment>
<comment type="tissue specificity">
    <text evidence="1 2">Salivary gland (at protein level).</text>
</comment>
<comment type="similarity">
    <text evidence="5">Belongs to the apyrase family.</text>
</comment>
<reference evidence="6" key="1">
    <citation type="journal article" date="1998" name="J. Biol. Chem.">
        <title>Purification, cloning, and expression of an apyrase from the bed bug Cimex lectularius. A new type of nucleotide-binding enzyme.</title>
        <authorList>
            <person name="Valenzuela J.G."/>
            <person name="Charlab R."/>
            <person name="Galperin M.Y."/>
            <person name="Ribeiro J.M.C."/>
        </authorList>
    </citation>
    <scope>NUCLEOTIDE SEQUENCE [MRNA]</scope>
    <scope>PROTEIN SEQUENCE OF 36-85; 263-284 AND 326-345</scope>
    <scope>FUNCTION</scope>
    <scope>CATALYTIC ACTIVITY</scope>
    <scope>COFACTOR</scope>
    <scope>TISSUE SPECIFICITY</scope>
    <source>
        <tissue evidence="6">Salivary gland</tissue>
    </source>
</reference>
<reference key="2">
    <citation type="journal article" date="1996" name="Insect Biochem. Mol. Biol.">
        <title>Apyrase and anti-platelet activities from the salivary glands of the bed bug Cimex lectularius.</title>
        <authorList>
            <person name="Valenzuela J.G."/>
            <person name="Chuffe O.M."/>
            <person name="Ribeiro J.M."/>
        </authorList>
    </citation>
    <scope>FUNCTION</scope>
    <scope>CATALYTIC ACTIVITY</scope>
    <scope>BIOPHYSICOCHEMICAL PROPERTIES</scope>
    <scope>COFACTOR</scope>
    <scope>TISSUE SPECIFICITY</scope>
</reference>
<keyword id="KW-0067">ATP-binding</keyword>
<keyword id="KW-0106">Calcium</keyword>
<keyword id="KW-0903">Direct protein sequencing</keyword>
<keyword id="KW-1199">Hemostasis impairing toxin</keyword>
<keyword id="KW-0378">Hydrolase</keyword>
<keyword id="KW-0479">Metal-binding</keyword>
<keyword id="KW-0547">Nucleotide-binding</keyword>
<keyword id="KW-1201">Platelet aggregation inhibiting toxin</keyword>
<keyword id="KW-1185">Reference proteome</keyword>
<keyword id="KW-0964">Secreted</keyword>
<keyword id="KW-0732">Signal</keyword>
<keyword id="KW-0800">Toxin</keyword>
<accession>O96559</accession>
<name>APY_CIMLE</name>
<gene>
    <name evidence="6" type="primary">APY</name>
</gene>
<feature type="signal peptide" evidence="1">
    <location>
        <begin position="1"/>
        <end position="35"/>
    </location>
</feature>
<feature type="chain" id="PRO_0000234527" description="Apyrase" evidence="1">
    <location>
        <begin position="36"/>
        <end position="364"/>
    </location>
</feature>
<proteinExistence type="evidence at protein level"/>
<sequence>MRSSYRVGNPIRFQPTNVVGLLLLSLVLSFMLVQSYELGHASGETNANSKYPLTTPVEENLKVRFKIGVISDDDKNAVSKDESNTWVSTYLTGTLEWEKSTDKITVQWDKGNEKKVKSKYSYGGRGMELSELVTFNGNLLTFDDRTGLVYILKDDKVYPWVVLADGDGKNSKGFKSEWATEKAGNLYVGSSGKEWTTKEGTIENYNPMWVKMINKNGEVTSLNWQTNYEKIRSSMNITFPGYMWHEAACWSDKYNKWFFLPRALSQEAYDSKKFETQGANVIISCDDKFEKCEPTQIQGKTEDKRGFSNFKFVPTSEDKIIVGLKTVEADDTTETYFTAFDLEGKVLLEETKIDDHKYEGVDFV</sequence>